<keyword id="KW-0325">Glycoprotein</keyword>
<keyword id="KW-0472">Membrane</keyword>
<keyword id="KW-0597">Phosphoprotein</keyword>
<keyword id="KW-1185">Reference proteome</keyword>
<keyword id="KW-0812">Transmembrane</keyword>
<keyword id="KW-1133">Transmembrane helix</keyword>
<gene>
    <name type="primary">MFSD11</name>
    <name type="ORF">QtsA-11525</name>
</gene>
<organism>
    <name type="scientific">Macaca fascicularis</name>
    <name type="common">Crab-eating macaque</name>
    <name type="synonym">Cynomolgus monkey</name>
    <dbReference type="NCBI Taxonomy" id="9541"/>
    <lineage>
        <taxon>Eukaryota</taxon>
        <taxon>Metazoa</taxon>
        <taxon>Chordata</taxon>
        <taxon>Craniata</taxon>
        <taxon>Vertebrata</taxon>
        <taxon>Euteleostomi</taxon>
        <taxon>Mammalia</taxon>
        <taxon>Eutheria</taxon>
        <taxon>Euarchontoglires</taxon>
        <taxon>Primates</taxon>
        <taxon>Haplorrhini</taxon>
        <taxon>Catarrhini</taxon>
        <taxon>Cercopithecidae</taxon>
        <taxon>Cercopithecinae</taxon>
        <taxon>Macaca</taxon>
    </lineage>
</organism>
<protein>
    <recommendedName>
        <fullName>UNC93-like protein MFSD11</fullName>
    </recommendedName>
    <alternativeName>
        <fullName>Major facilitator superfamily domain-containing protein 11</fullName>
    </alternativeName>
</protein>
<evidence type="ECO:0000250" key="1">
    <source>
        <dbReference type="UniProtKB" id="Q8BJ51"/>
    </source>
</evidence>
<evidence type="ECO:0000255" key="2"/>
<evidence type="ECO:0000305" key="3"/>
<name>MFS11_MACFA</name>
<accession>Q4R495</accession>
<proteinExistence type="evidence at transcript level"/>
<reference key="1">
    <citation type="submission" date="2005-06" db="EMBL/GenBank/DDBJ databases">
        <title>DNA sequences of macaque genes expressed in brain or testis and its evolutionary implications.</title>
        <authorList>
            <consortium name="International consortium for macaque cDNA sequencing and analysis"/>
        </authorList>
    </citation>
    <scope>NUCLEOTIDE SEQUENCE [LARGE SCALE MRNA]</scope>
    <source>
        <tissue>Testis</tissue>
    </source>
</reference>
<comment type="subcellular location">
    <subcellularLocation>
        <location evidence="3">Membrane</location>
        <topology evidence="3">Multi-pass membrane protein</topology>
    </subcellularLocation>
</comment>
<comment type="similarity">
    <text evidence="3">Belongs to the unc-93 family.</text>
</comment>
<comment type="caution">
    <text evidence="3">Despite its name it is related to the unc-93 family and not to the major facilitator superfamily.</text>
</comment>
<feature type="chain" id="PRO_0000305020" description="UNC93-like protein MFSD11">
    <location>
        <begin position="1"/>
        <end position="449"/>
    </location>
</feature>
<feature type="transmembrane region" description="Helical" evidence="2">
    <location>
        <begin position="8"/>
        <end position="28"/>
    </location>
</feature>
<feature type="transmembrane region" description="Helical" evidence="2">
    <location>
        <begin position="53"/>
        <end position="73"/>
    </location>
</feature>
<feature type="transmembrane region" description="Helical" evidence="2">
    <location>
        <begin position="74"/>
        <end position="94"/>
    </location>
</feature>
<feature type="transmembrane region" description="Helical" evidence="2">
    <location>
        <begin position="96"/>
        <end position="116"/>
    </location>
</feature>
<feature type="transmembrane region" description="Helical" evidence="2">
    <location>
        <begin position="138"/>
        <end position="158"/>
    </location>
</feature>
<feature type="transmembrane region" description="Helical" evidence="2">
    <location>
        <begin position="170"/>
        <end position="190"/>
    </location>
</feature>
<feature type="transmembrane region" description="Helical" evidence="2">
    <location>
        <begin position="239"/>
        <end position="259"/>
    </location>
</feature>
<feature type="transmembrane region" description="Helical" evidence="2">
    <location>
        <begin position="277"/>
        <end position="297"/>
    </location>
</feature>
<feature type="transmembrane region" description="Helical" evidence="2">
    <location>
        <begin position="309"/>
        <end position="329"/>
    </location>
</feature>
<feature type="transmembrane region" description="Helical" evidence="2">
    <location>
        <begin position="359"/>
        <end position="379"/>
    </location>
</feature>
<feature type="transmembrane region" description="Helical" evidence="2">
    <location>
        <begin position="385"/>
        <end position="405"/>
    </location>
</feature>
<feature type="transmembrane region" description="Helical" evidence="2">
    <location>
        <begin position="410"/>
        <end position="430"/>
    </location>
</feature>
<feature type="modified residue" description="Phosphoserine" evidence="1">
    <location>
        <position position="204"/>
    </location>
</feature>
<feature type="glycosylation site" description="N-linked (GlcNAc...) asparagine" evidence="2">
    <location>
        <position position="40"/>
    </location>
</feature>
<sequence>MSPESKKLFNIIILGVAFMFMFTAFQTCGNVAQTVIRSLNSTDFHGSGYTSMAIIYGVFSASNLITPSVVAIVGPQLSMFASGLFYSMYIAVFIQPFPWSFYTASVFIGIAAAVLWTAQGNCLTINSDEHTIGRNSGIFWALLQSSLFFGNLYIYFAWQGKTQISESDRRTVFIALTVISLVGTVLFFLIRKPDSENVLGEDESSDDQDMEVNESAQNNLTKAVDAFKKSFKLCVTKEMLLLSITTAYTGLELTFFSGVYGTCIGAINKFGAEEKSLIGLSGIFIGIGEILGGSLFGLLSKNNRFGRNPVVLLGILVHFIAFYLIFLNMPGDAPIAPVKGTDSSAYIKSSKEVAILCSFLLGLGDSCFNTQLLSILGFLYSEDSAPAFAIFKFVQSICAAVAFFYSNYLLLHWQLLVMVIFGFFGTISFFTVEWEAAAFVARGSDYRSI</sequence>
<dbReference type="EMBL" id="AB179020">
    <property type="protein sequence ID" value="BAE02071.1"/>
    <property type="molecule type" value="mRNA"/>
</dbReference>
<dbReference type="RefSeq" id="NP_001271772.1">
    <property type="nucleotide sequence ID" value="NM_001284843.1"/>
</dbReference>
<dbReference type="RefSeq" id="XP_005585136.1">
    <property type="nucleotide sequence ID" value="XM_005585079.4"/>
</dbReference>
<dbReference type="RefSeq" id="XP_005585137.1">
    <property type="nucleotide sequence ID" value="XM_005585080.4"/>
</dbReference>
<dbReference type="RefSeq" id="XP_015293313.1">
    <property type="nucleotide sequence ID" value="XM_015437827.3"/>
</dbReference>
<dbReference type="RefSeq" id="XP_045232530.1">
    <property type="nucleotide sequence ID" value="XM_045376595.2"/>
</dbReference>
<dbReference type="SMR" id="Q4R495"/>
<dbReference type="STRING" id="9541.ENSMFAP00000036643"/>
<dbReference type="GlyCosmos" id="Q4R495">
    <property type="glycosylation" value="1 site, No reported glycans"/>
</dbReference>
<dbReference type="Ensembl" id="ENSMFAT00000010889.2">
    <property type="protein sequence ID" value="ENSMFAP00000036643.1"/>
    <property type="gene ID" value="ENSMFAG00000034595.2"/>
</dbReference>
<dbReference type="GeneID" id="101866935"/>
<dbReference type="CTD" id="79157"/>
<dbReference type="VEuPathDB" id="HostDB:ENSMFAG00000034595"/>
<dbReference type="eggNOG" id="KOG3098">
    <property type="taxonomic scope" value="Eukaryota"/>
</dbReference>
<dbReference type="GeneTree" id="ENSGT00390000012918"/>
<dbReference type="Proteomes" id="UP000233100">
    <property type="component" value="Chromosome 16"/>
</dbReference>
<dbReference type="Bgee" id="ENSMFAG00000034595">
    <property type="expression patterns" value="Expressed in heart and 13 other cell types or tissues"/>
</dbReference>
<dbReference type="GO" id="GO:0016020">
    <property type="term" value="C:membrane"/>
    <property type="evidence" value="ECO:0007669"/>
    <property type="project" value="UniProtKB-SubCell"/>
</dbReference>
<dbReference type="CDD" id="cd17407">
    <property type="entry name" value="MFS_MFSD11"/>
    <property type="match status" value="1"/>
</dbReference>
<dbReference type="Gene3D" id="1.20.1250.20">
    <property type="entry name" value="MFS general substrate transporter like domains"/>
    <property type="match status" value="2"/>
</dbReference>
<dbReference type="InterPro" id="IPR010291">
    <property type="entry name" value="Ion_channel_UNC-93"/>
</dbReference>
<dbReference type="InterPro" id="IPR036259">
    <property type="entry name" value="MFS_trans_sf"/>
</dbReference>
<dbReference type="InterPro" id="IPR051617">
    <property type="entry name" value="UNC-93-like_regulator"/>
</dbReference>
<dbReference type="PANTHER" id="PTHR23294">
    <property type="entry name" value="ET TRANSLATION PRODUCT-RELATED"/>
    <property type="match status" value="1"/>
</dbReference>
<dbReference type="PANTHER" id="PTHR23294:SF0">
    <property type="entry name" value="UNC93-LIKE PROTEIN MFSD11"/>
    <property type="match status" value="1"/>
</dbReference>
<dbReference type="Pfam" id="PF05978">
    <property type="entry name" value="UNC-93"/>
    <property type="match status" value="1"/>
</dbReference>
<dbReference type="SUPFAM" id="SSF103473">
    <property type="entry name" value="MFS general substrate transporter"/>
    <property type="match status" value="1"/>
</dbReference>